<proteinExistence type="evidence at transcript level"/>
<dbReference type="EMBL" id="AB604624">
    <property type="protein sequence ID" value="BAK39924.1"/>
    <property type="molecule type" value="mRNA"/>
</dbReference>
<dbReference type="EMBL" id="DP000010">
    <property type="protein sequence ID" value="ABA92206.2"/>
    <property type="status" value="ALT_SEQ"/>
    <property type="molecule type" value="Genomic_DNA"/>
</dbReference>
<dbReference type="EMBL" id="AP008217">
    <property type="protein sequence ID" value="BAH95163.1"/>
    <property type="status" value="ALT_SEQ"/>
    <property type="molecule type" value="Genomic_DNA"/>
</dbReference>
<dbReference type="EMBL" id="AP014967">
    <property type="protein sequence ID" value="BAT13283.1"/>
    <property type="status" value="ALT_SEQ"/>
    <property type="molecule type" value="Genomic_DNA"/>
</dbReference>
<dbReference type="EMBL" id="AK066950">
    <property type="protein sequence ID" value="BAG90195.1"/>
    <property type="status" value="ALT_INIT"/>
    <property type="molecule type" value="mRNA"/>
</dbReference>
<dbReference type="RefSeq" id="XP_015617249.1">
    <property type="nucleotide sequence ID" value="XM_015761763.1"/>
</dbReference>
<dbReference type="RefSeq" id="XP_015617250.1">
    <property type="nucleotide sequence ID" value="XM_015761764.1"/>
</dbReference>
<dbReference type="RefSeq" id="XP_015617251.1">
    <property type="nucleotide sequence ID" value="XM_015761765.1"/>
</dbReference>
<dbReference type="RefSeq" id="XP_015617252.1">
    <property type="nucleotide sequence ID" value="XM_015761766.1"/>
</dbReference>
<dbReference type="SMR" id="F7J0M6"/>
<dbReference type="FunCoup" id="F7J0M6">
    <property type="interactions" value="739"/>
</dbReference>
<dbReference type="STRING" id="39947.F7J0M6"/>
<dbReference type="PaxDb" id="39947-F7J0M6"/>
<dbReference type="EnsemblPlants" id="Os11t0225100-01">
    <property type="protein sequence ID" value="Os11t0225100-01"/>
    <property type="gene ID" value="Os11g0225100"/>
</dbReference>
<dbReference type="Gramene" id="Os11t0225100-01">
    <property type="protein sequence ID" value="Os11t0225100-01"/>
    <property type="gene ID" value="Os11g0225100"/>
</dbReference>
<dbReference type="KEGG" id="dosa:Os11g0225100"/>
<dbReference type="InParanoid" id="F7J0M6"/>
<dbReference type="OrthoDB" id="629305at2759"/>
<dbReference type="Proteomes" id="UP000000763">
    <property type="component" value="Chromosome 11"/>
</dbReference>
<dbReference type="Proteomes" id="UP000059680">
    <property type="component" value="Chromosome 11"/>
</dbReference>
<dbReference type="GO" id="GO:0043531">
    <property type="term" value="F:ADP binding"/>
    <property type="evidence" value="ECO:0007669"/>
    <property type="project" value="InterPro"/>
</dbReference>
<dbReference type="GO" id="GO:0005524">
    <property type="term" value="F:ATP binding"/>
    <property type="evidence" value="ECO:0007669"/>
    <property type="project" value="UniProtKB-KW"/>
</dbReference>
<dbReference type="GO" id="GO:0098542">
    <property type="term" value="P:defense response to other organism"/>
    <property type="evidence" value="ECO:0000318"/>
    <property type="project" value="GO_Central"/>
</dbReference>
<dbReference type="FunFam" id="1.10.10.10:FF:000322">
    <property type="entry name" value="Probable disease resistance protein At1g63360"/>
    <property type="match status" value="1"/>
</dbReference>
<dbReference type="Gene3D" id="1.20.5.4130">
    <property type="match status" value="1"/>
</dbReference>
<dbReference type="Gene3D" id="1.10.8.430">
    <property type="entry name" value="Helical domain of apoptotic protease-activating factors"/>
    <property type="match status" value="1"/>
</dbReference>
<dbReference type="Gene3D" id="3.40.50.300">
    <property type="entry name" value="P-loop containing nucleotide triphosphate hydrolases"/>
    <property type="match status" value="1"/>
</dbReference>
<dbReference type="Gene3D" id="3.80.10.10">
    <property type="entry name" value="Ribonuclease Inhibitor"/>
    <property type="match status" value="1"/>
</dbReference>
<dbReference type="Gene3D" id="1.10.10.10">
    <property type="entry name" value="Winged helix-like DNA-binding domain superfamily/Winged helix DNA-binding domain"/>
    <property type="match status" value="1"/>
</dbReference>
<dbReference type="InterPro" id="IPR042197">
    <property type="entry name" value="Apaf_helical"/>
</dbReference>
<dbReference type="InterPro" id="IPR044974">
    <property type="entry name" value="Disease_R_plants"/>
</dbReference>
<dbReference type="InterPro" id="IPR032675">
    <property type="entry name" value="LRR_dom_sf"/>
</dbReference>
<dbReference type="InterPro" id="IPR055414">
    <property type="entry name" value="LRR_R13L4/SHOC2-like"/>
</dbReference>
<dbReference type="InterPro" id="IPR002182">
    <property type="entry name" value="NB-ARC"/>
</dbReference>
<dbReference type="InterPro" id="IPR027417">
    <property type="entry name" value="P-loop_NTPase"/>
</dbReference>
<dbReference type="InterPro" id="IPR041118">
    <property type="entry name" value="Rx_N"/>
</dbReference>
<dbReference type="InterPro" id="IPR036388">
    <property type="entry name" value="WH-like_DNA-bd_sf"/>
</dbReference>
<dbReference type="PANTHER" id="PTHR23155:SF1233">
    <property type="entry name" value="DISEASE RESISTANCE PROTEIN RGA4"/>
    <property type="match status" value="1"/>
</dbReference>
<dbReference type="PANTHER" id="PTHR23155">
    <property type="entry name" value="DISEASE RESISTANCE PROTEIN RP"/>
    <property type="match status" value="1"/>
</dbReference>
<dbReference type="Pfam" id="PF23598">
    <property type="entry name" value="LRR_14"/>
    <property type="match status" value="1"/>
</dbReference>
<dbReference type="Pfam" id="PF00931">
    <property type="entry name" value="NB-ARC"/>
    <property type="match status" value="1"/>
</dbReference>
<dbReference type="Pfam" id="PF18052">
    <property type="entry name" value="Rx_N"/>
    <property type="match status" value="1"/>
</dbReference>
<dbReference type="Pfam" id="PF23559">
    <property type="entry name" value="WH_DRP"/>
    <property type="match status" value="1"/>
</dbReference>
<dbReference type="PRINTS" id="PR00364">
    <property type="entry name" value="DISEASERSIST"/>
</dbReference>
<dbReference type="SUPFAM" id="SSF52058">
    <property type="entry name" value="L domain-like"/>
    <property type="match status" value="1"/>
</dbReference>
<dbReference type="SUPFAM" id="SSF52540">
    <property type="entry name" value="P-loop containing nucleoside triphosphate hydrolases"/>
    <property type="match status" value="1"/>
</dbReference>
<evidence type="ECO:0000250" key="1">
    <source>
        <dbReference type="UniProtKB" id="F7J0M4"/>
    </source>
</evidence>
<evidence type="ECO:0000255" key="2"/>
<evidence type="ECO:0000269" key="3">
    <source>
    </source>
</evidence>
<evidence type="ECO:0000303" key="4">
    <source>
    </source>
</evidence>
<evidence type="ECO:0000305" key="5"/>
<evidence type="ECO:0000312" key="6">
    <source>
        <dbReference type="EMBL" id="ABA92206.2"/>
    </source>
</evidence>
<evidence type="ECO:0000312" key="7">
    <source>
        <dbReference type="EMBL" id="BAK39924.1"/>
    </source>
</evidence>
<evidence type="ECO:0000312" key="8">
    <source>
        <dbReference type="EMBL" id="BAT13283.1"/>
    </source>
</evidence>
<feature type="chain" id="PRO_0000444660" description="Disease resistance protein RGA4">
    <location>
        <begin position="1"/>
        <end position="1014"/>
    </location>
</feature>
<feature type="domain" description="NB-ARC" evidence="2">
    <location>
        <begin position="189"/>
        <end position="466"/>
    </location>
</feature>
<feature type="repeat" description="LRR 1" evidence="2">
    <location>
        <begin position="484"/>
        <end position="506"/>
    </location>
</feature>
<feature type="repeat" description="LRR 2" evidence="2">
    <location>
        <begin position="507"/>
        <end position="530"/>
    </location>
</feature>
<feature type="repeat" description="LRR 3" evidence="2">
    <location>
        <begin position="531"/>
        <end position="552"/>
    </location>
</feature>
<feature type="repeat" description="LRR 4" evidence="2">
    <location>
        <begin position="580"/>
        <end position="602"/>
    </location>
</feature>
<feature type="repeat" description="LRR 5" evidence="2">
    <location>
        <begin position="603"/>
        <end position="624"/>
    </location>
</feature>
<feature type="repeat" description="LRR 6" evidence="2">
    <location>
        <begin position="625"/>
        <end position="647"/>
    </location>
</feature>
<feature type="repeat" description="LRR 7" evidence="2">
    <location>
        <begin position="701"/>
        <end position="725"/>
    </location>
</feature>
<feature type="repeat" description="LRR 8" evidence="2">
    <location>
        <begin position="762"/>
        <end position="784"/>
    </location>
</feature>
<feature type="repeat" description="LRR 9" evidence="2">
    <location>
        <begin position="785"/>
        <end position="807"/>
    </location>
</feature>
<feature type="repeat" description="LRR 10" evidence="2">
    <location>
        <begin position="808"/>
        <end position="833"/>
    </location>
</feature>
<feature type="repeat" description="LRR 11" evidence="2">
    <location>
        <begin position="854"/>
        <end position="877"/>
    </location>
</feature>
<feature type="region of interest" description="Structured coiled coil (CC) domain" evidence="1">
    <location>
        <begin position="1"/>
        <end position="182"/>
    </location>
</feature>
<feature type="coiled-coil region" evidence="2">
    <location>
        <begin position="105"/>
        <end position="145"/>
    </location>
</feature>
<gene>
    <name evidence="4" type="primary">RGA4</name>
    <name evidence="8" type="ordered locus">Os11g0225100</name>
    <name evidence="6" type="ordered locus">LOC_Os11g11790</name>
</gene>
<sequence>MEAALLSGFIKAILPRLFSLVNDKLNLHKGVKGDIDFLIKELRMIVGAIDDDLSVEHGAAAAAAAVQTLCMEDLRELAHGIEDCIDGVLYRAAREQRRSSSLLPRTVRATKKLLQTNQHLAQELQRLKRMVEEANQRKQRYTAAAPGQHGQVYSSAAAQVDEPWPSCSSASDPRIHEADLVGVDADRAELLEQLAERQPEQLKVIAIVGFCGLGKTALAAEAYNRETRGGRFERHAWVCAAHRSAREVLGELLRRIDAACHGDSDAGQLCVDIRQQLEKKRYFIVIDDIQTEDQWKSIKSAFPTDKDIGSRIVVTTTIQSVANACCSANGYLHKMSRLDKNCSKQLLSKKACPERYSHYKQPDSAAILKKCDGQPLALVTIGEFLQANGWPTGPNCEDLCNRLHYHLENDKTLERMRRVLVRNYTSLPGHALKACLLYFGMFPSDHPIRRKSLLRRWLAEGFVEPVSSSSNLDSTAAFDVLMDRNIIEPINVSNNDKVKTCQTYGMMREFISHMSISQNFVTFFCDDKFLPKYVRRLSLHGDTVVNGDNFNGIDLSLVRSLVVFGEAGTTVLDFSKYQLLRVLDLEKCDDLNDDHLKEICNLVLLKYLSLGGNISKLPKDIAKLKDLEALDVRRSKVKIMPVEVFGLPCLIHLLGKFKLSDKVKQKTEVQEFLSKGKSNLQTLAGFASNGSEGFLHLMRYMNKLRKLKIWCTSSAGSTDWTDLREAIQQFILDEKEANIGTRSLSLHFTGCSEDAINSLKEPCYLSSLKLHGNFPQLPQFVTSLRGLKELCLSSTKFTTGLLEALSNLSYLQYLKLVADELEKFIIKVQGFPRLLCLCIVLQCPTFPVIEEGALPFLVTLQLLCKDLHGLSDIKIECFKHLQEVTLHSGVTPATRQEWVKAAKEHPNRPKVLLLKSVDTAESEHTDVDSVMEAVKSETTEYSIAPEGPEQVIDMNNKMQLDHGLESSSVLNKQNNFADQSSSKDQLHYSFNNMGLSDVSPAVSELPNGMVPSCT</sequence>
<reference key="1">
    <citation type="journal article" date="2011" name="Plant J.">
        <title>A multifaceted genomics approach allows the isolation of the rice Pia-blast resistance gene consisting of two adjacent NBS-LRR protein genes.</title>
        <authorList>
            <person name="Okuyama Y."/>
            <person name="Kanzaki H."/>
            <person name="Abe A."/>
            <person name="Yoshida K."/>
            <person name="Tamiru M."/>
            <person name="Saitoh H."/>
            <person name="Fujibe T."/>
            <person name="Matsumura H."/>
            <person name="Shenton M."/>
            <person name="Galam D.C."/>
            <person name="Undan J."/>
            <person name="Ito A."/>
            <person name="Sone T."/>
            <person name="Terauchi R."/>
        </authorList>
    </citation>
    <scope>NUCLEOTIDE SEQUENCE [MRNA]</scope>
    <scope>FUNCTION</scope>
    <scope>TISSUE SPECIFICITY</scope>
    <source>
        <strain evidence="7">cv. Hitomebore</strain>
        <strain evidence="7">cv. Mokoto</strain>
        <strain evidence="7">cv. Nipponbare</strain>
        <tissue evidence="7">Leaf</tissue>
    </source>
</reference>
<reference key="2">
    <citation type="journal article" date="2005" name="BMC Biol.">
        <title>The sequence of rice chromosomes 11 and 12, rich in disease resistance genes and recent gene duplications.</title>
        <authorList>
            <consortium name="The rice chromosomes 11 and 12 sequencing consortia"/>
        </authorList>
    </citation>
    <scope>NUCLEOTIDE SEQUENCE [LARGE SCALE GENOMIC DNA]</scope>
    <source>
        <strain>cv. Nipponbare</strain>
    </source>
</reference>
<reference key="3">
    <citation type="journal article" date="2005" name="Nature">
        <title>The map-based sequence of the rice genome.</title>
        <authorList>
            <consortium name="International rice genome sequencing project (IRGSP)"/>
        </authorList>
    </citation>
    <scope>NUCLEOTIDE SEQUENCE [LARGE SCALE GENOMIC DNA]</scope>
    <source>
        <strain>cv. Nipponbare</strain>
    </source>
</reference>
<reference key="4">
    <citation type="journal article" date="2008" name="Nucleic Acids Res.">
        <title>The rice annotation project database (RAP-DB): 2008 update.</title>
        <authorList>
            <consortium name="The rice annotation project (RAP)"/>
        </authorList>
    </citation>
    <scope>GENOME REANNOTATION</scope>
    <source>
        <strain>cv. Nipponbare</strain>
    </source>
</reference>
<reference key="5">
    <citation type="journal article" date="2013" name="Rice">
        <title>Improvement of the Oryza sativa Nipponbare reference genome using next generation sequence and optical map data.</title>
        <authorList>
            <person name="Kawahara Y."/>
            <person name="de la Bastide M."/>
            <person name="Hamilton J.P."/>
            <person name="Kanamori H."/>
            <person name="McCombie W.R."/>
            <person name="Ouyang S."/>
            <person name="Schwartz D.C."/>
            <person name="Tanaka T."/>
            <person name="Wu J."/>
            <person name="Zhou S."/>
            <person name="Childs K.L."/>
            <person name="Davidson R.M."/>
            <person name="Lin H."/>
            <person name="Quesada-Ocampo L."/>
            <person name="Vaillancourt B."/>
            <person name="Sakai H."/>
            <person name="Lee S.S."/>
            <person name="Kim J."/>
            <person name="Numa H."/>
            <person name="Itoh T."/>
            <person name="Buell C.R."/>
            <person name="Matsumoto T."/>
        </authorList>
    </citation>
    <scope>GENOME REANNOTATION</scope>
    <source>
        <strain>cv. Nipponbare</strain>
    </source>
</reference>
<reference key="6">
    <citation type="journal article" date="2003" name="Science">
        <title>Collection, mapping, and annotation of over 28,000 cDNA clones from japonica rice.</title>
        <authorList>
            <consortium name="The rice full-length cDNA consortium"/>
        </authorList>
    </citation>
    <scope>NUCLEOTIDE SEQUENCE [LARGE SCALE MRNA]</scope>
    <source>
        <strain>cv. Nipponbare</strain>
    </source>
</reference>
<protein>
    <recommendedName>
        <fullName evidence="5">Disease resistance protein RGA4</fullName>
    </recommendedName>
    <alternativeName>
        <fullName evidence="7">Os11gRGA4</fullName>
    </alternativeName>
</protein>
<name>RGA4S_ORYSJ</name>
<comment type="function">
    <text evidence="3">Probable disease resistance protein. Resistance proteins guard the plant against pathogens that contain an appropriate avirulence protein via an indirect interaction with this avirulence protein. That triggers a defense system including the hypersensitive response, which restricts the pathogen growth. At the opposite of cultivars Aichi asahi and Sasanishiki, the cultivars Nipponbare, Mokoto and Hitomebore don't recognize the effector avirulence protein AVR-Pia from M.oryzae.</text>
</comment>
<comment type="tissue specificity">
    <text evidence="3">Expressed in leaves.</text>
</comment>
<comment type="similarity">
    <text evidence="5">Belongs to the disease resistance NB-LRR family.</text>
</comment>
<comment type="sequence caution" evidence="5">
    <conflict type="erroneous gene model prediction">
        <sequence resource="EMBL-CDS" id="ABA92206"/>
    </conflict>
</comment>
<comment type="sequence caution" evidence="5">
    <conflict type="erroneous initiation">
        <sequence resource="EMBL-CDS" id="BAG90195"/>
    </conflict>
    <text>Truncated N-terminus.</text>
</comment>
<comment type="sequence caution" evidence="5">
    <conflict type="erroneous gene model prediction">
        <sequence resource="EMBL-CDS" id="BAH95163"/>
    </conflict>
</comment>
<comment type="sequence caution" evidence="5">
    <conflict type="erroneous gene model prediction">
        <sequence resource="EMBL-CDS" id="BAT13283"/>
    </conflict>
</comment>
<keyword id="KW-0067">ATP-binding</keyword>
<keyword id="KW-0175">Coiled coil</keyword>
<keyword id="KW-0433">Leucine-rich repeat</keyword>
<keyword id="KW-0547">Nucleotide-binding</keyword>
<keyword id="KW-0611">Plant defense</keyword>
<keyword id="KW-1185">Reference proteome</keyword>
<keyword id="KW-0677">Repeat</keyword>
<accession>F7J0M6</accession>
<accession>A0A0P0Y0F1</accession>
<accession>Q2R8L3</accession>
<organism>
    <name type="scientific">Oryza sativa subsp. japonica</name>
    <name type="common">Rice</name>
    <dbReference type="NCBI Taxonomy" id="39947"/>
    <lineage>
        <taxon>Eukaryota</taxon>
        <taxon>Viridiplantae</taxon>
        <taxon>Streptophyta</taxon>
        <taxon>Embryophyta</taxon>
        <taxon>Tracheophyta</taxon>
        <taxon>Spermatophyta</taxon>
        <taxon>Magnoliopsida</taxon>
        <taxon>Liliopsida</taxon>
        <taxon>Poales</taxon>
        <taxon>Poaceae</taxon>
        <taxon>BOP clade</taxon>
        <taxon>Oryzoideae</taxon>
        <taxon>Oryzeae</taxon>
        <taxon>Oryzinae</taxon>
        <taxon>Oryza</taxon>
        <taxon>Oryza sativa</taxon>
    </lineage>
</organism>